<name>RF1_CLAM3</name>
<feature type="chain" id="PRO_1000004879" description="Peptide chain release factor 1">
    <location>
        <begin position="1"/>
        <end position="359"/>
    </location>
</feature>
<feature type="modified residue" description="N5-methylglutamine" evidence="1">
    <location>
        <position position="234"/>
    </location>
</feature>
<reference key="1">
    <citation type="journal article" date="2008" name="J. Bacteriol.">
        <title>The genome sequence of the tomato-pathogenic actinomycete Clavibacter michiganensis subsp. michiganensis NCPPB382 reveals a large island involved in pathogenicity.</title>
        <authorList>
            <person name="Gartemann K.-H."/>
            <person name="Abt B."/>
            <person name="Bekel T."/>
            <person name="Burger A."/>
            <person name="Engemann J."/>
            <person name="Fluegel M."/>
            <person name="Gaigalat L."/>
            <person name="Goesmann A."/>
            <person name="Graefen I."/>
            <person name="Kalinowski J."/>
            <person name="Kaup O."/>
            <person name="Kirchner O."/>
            <person name="Krause L."/>
            <person name="Linke B."/>
            <person name="McHardy A."/>
            <person name="Meyer F."/>
            <person name="Pohle S."/>
            <person name="Rueckert C."/>
            <person name="Schneiker S."/>
            <person name="Zellermann E.-M."/>
            <person name="Puehler A."/>
            <person name="Eichenlaub R."/>
            <person name="Kaiser O."/>
            <person name="Bartels D."/>
        </authorList>
    </citation>
    <scope>NUCLEOTIDE SEQUENCE [LARGE SCALE GENOMIC DNA]</scope>
    <source>
        <strain>NCPPB 382</strain>
    </source>
</reference>
<organism>
    <name type="scientific">Clavibacter michiganensis subsp. michiganensis (strain NCPPB 382)</name>
    <dbReference type="NCBI Taxonomy" id="443906"/>
    <lineage>
        <taxon>Bacteria</taxon>
        <taxon>Bacillati</taxon>
        <taxon>Actinomycetota</taxon>
        <taxon>Actinomycetes</taxon>
        <taxon>Micrococcales</taxon>
        <taxon>Microbacteriaceae</taxon>
        <taxon>Clavibacter</taxon>
    </lineage>
</organism>
<keyword id="KW-0963">Cytoplasm</keyword>
<keyword id="KW-0488">Methylation</keyword>
<keyword id="KW-0648">Protein biosynthesis</keyword>
<gene>
    <name evidence="1" type="primary">prfA</name>
    <name type="ordered locus">CMM_1157</name>
</gene>
<proteinExistence type="inferred from homology"/>
<evidence type="ECO:0000255" key="1">
    <source>
        <dbReference type="HAMAP-Rule" id="MF_00093"/>
    </source>
</evidence>
<accession>A5CQ48</accession>
<sequence length="359" mass="39856">MFESVVQLLEEHEELQQQLGDPELHADASRSRKVNRRYAELSRIVAAHAEWTQLGDDLAAARELAEEDPAFADEIPGLEQALDAAQEKLRRLLIPRDPDDARDVIMEIKMGEGGAESALFAADLLRMYLHYAESRRWKTEVLSQTQSDLGGYKDVQVAIKGTSDDPALGVWAHLKYEGGVHRVQRVPATESQGRIHTSAAGVLVIPEVEEVEEVAIDPNDLKIDVYRSSGPGGQSVNTTDSAVRITHLPTGIVVAMQNEKSQLQNREAGMRVLRARVLAKQQEEIDAEASAVRRSQIRTMDRSERIRTYNFPENRIADHRTGYKAYNLDAVMDGALDPVVESCIQADEEARLDALGTDA</sequence>
<protein>
    <recommendedName>
        <fullName evidence="1">Peptide chain release factor 1</fullName>
        <shortName evidence="1">RF-1</shortName>
    </recommendedName>
</protein>
<comment type="function">
    <text evidence="1">Peptide chain release factor 1 directs the termination of translation in response to the peptide chain termination codons UAG and UAA.</text>
</comment>
<comment type="subcellular location">
    <subcellularLocation>
        <location evidence="1">Cytoplasm</location>
    </subcellularLocation>
</comment>
<comment type="PTM">
    <text evidence="1">Methylated by PrmC. Methylation increases the termination efficiency of RF1.</text>
</comment>
<comment type="similarity">
    <text evidence="1">Belongs to the prokaryotic/mitochondrial release factor family.</text>
</comment>
<dbReference type="EMBL" id="AM711867">
    <property type="protein sequence ID" value="CAN01201.1"/>
    <property type="molecule type" value="Genomic_DNA"/>
</dbReference>
<dbReference type="RefSeq" id="WP_012037843.1">
    <property type="nucleotide sequence ID" value="NC_009480.1"/>
</dbReference>
<dbReference type="SMR" id="A5CQ48"/>
<dbReference type="KEGG" id="cmi:CMM_1157"/>
<dbReference type="eggNOG" id="COG0216">
    <property type="taxonomic scope" value="Bacteria"/>
</dbReference>
<dbReference type="HOGENOM" id="CLU_036856_0_1_11"/>
<dbReference type="OrthoDB" id="9806673at2"/>
<dbReference type="Proteomes" id="UP000001564">
    <property type="component" value="Chromosome"/>
</dbReference>
<dbReference type="GO" id="GO:0005737">
    <property type="term" value="C:cytoplasm"/>
    <property type="evidence" value="ECO:0007669"/>
    <property type="project" value="UniProtKB-SubCell"/>
</dbReference>
<dbReference type="GO" id="GO:0016149">
    <property type="term" value="F:translation release factor activity, codon specific"/>
    <property type="evidence" value="ECO:0007669"/>
    <property type="project" value="UniProtKB-UniRule"/>
</dbReference>
<dbReference type="FunFam" id="3.30.160.20:FF:000004">
    <property type="entry name" value="Peptide chain release factor 1"/>
    <property type="match status" value="1"/>
</dbReference>
<dbReference type="FunFam" id="3.30.70.1660:FF:000002">
    <property type="entry name" value="Peptide chain release factor 1"/>
    <property type="match status" value="1"/>
</dbReference>
<dbReference type="Gene3D" id="3.30.160.20">
    <property type="match status" value="1"/>
</dbReference>
<dbReference type="Gene3D" id="3.30.70.1660">
    <property type="match status" value="1"/>
</dbReference>
<dbReference type="Gene3D" id="6.10.140.1950">
    <property type="match status" value="1"/>
</dbReference>
<dbReference type="HAMAP" id="MF_00093">
    <property type="entry name" value="Rel_fac_1"/>
    <property type="match status" value="1"/>
</dbReference>
<dbReference type="InterPro" id="IPR005139">
    <property type="entry name" value="PCRF"/>
</dbReference>
<dbReference type="InterPro" id="IPR000352">
    <property type="entry name" value="Pep_chain_release_fac_I"/>
</dbReference>
<dbReference type="InterPro" id="IPR045853">
    <property type="entry name" value="Pep_chain_release_fac_I_sf"/>
</dbReference>
<dbReference type="InterPro" id="IPR050057">
    <property type="entry name" value="Prokaryotic/Mito_RF"/>
</dbReference>
<dbReference type="InterPro" id="IPR004373">
    <property type="entry name" value="RF-1"/>
</dbReference>
<dbReference type="NCBIfam" id="TIGR00019">
    <property type="entry name" value="prfA"/>
    <property type="match status" value="1"/>
</dbReference>
<dbReference type="NCBIfam" id="NF001859">
    <property type="entry name" value="PRK00591.1"/>
    <property type="match status" value="1"/>
</dbReference>
<dbReference type="PANTHER" id="PTHR43804">
    <property type="entry name" value="LD18447P"/>
    <property type="match status" value="1"/>
</dbReference>
<dbReference type="PANTHER" id="PTHR43804:SF7">
    <property type="entry name" value="LD18447P"/>
    <property type="match status" value="1"/>
</dbReference>
<dbReference type="Pfam" id="PF03462">
    <property type="entry name" value="PCRF"/>
    <property type="match status" value="1"/>
</dbReference>
<dbReference type="Pfam" id="PF00472">
    <property type="entry name" value="RF-1"/>
    <property type="match status" value="1"/>
</dbReference>
<dbReference type="SMART" id="SM00937">
    <property type="entry name" value="PCRF"/>
    <property type="match status" value="1"/>
</dbReference>
<dbReference type="SUPFAM" id="SSF75620">
    <property type="entry name" value="Release factor"/>
    <property type="match status" value="1"/>
</dbReference>
<dbReference type="PROSITE" id="PS00745">
    <property type="entry name" value="RF_PROK_I"/>
    <property type="match status" value="1"/>
</dbReference>